<feature type="chain" id="PRO_1000016537" description="tRNA uridine 5-carboxymethylaminomethyl modification enzyme MnmG">
    <location>
        <begin position="1"/>
        <end position="655"/>
    </location>
</feature>
<feature type="binding site" evidence="1">
    <location>
        <begin position="13"/>
        <end position="18"/>
    </location>
    <ligand>
        <name>FAD</name>
        <dbReference type="ChEBI" id="CHEBI:57692"/>
    </ligand>
</feature>
<feature type="binding site" evidence="1">
    <location>
        <begin position="281"/>
        <end position="295"/>
    </location>
    <ligand>
        <name>NAD(+)</name>
        <dbReference type="ChEBI" id="CHEBI:57540"/>
    </ligand>
</feature>
<reference key="1">
    <citation type="submission" date="2006-12" db="EMBL/GenBank/DDBJ databases">
        <title>Complete sequence of Acidovorax avenae subsp. citrulli AAC00-1.</title>
        <authorList>
            <person name="Copeland A."/>
            <person name="Lucas S."/>
            <person name="Lapidus A."/>
            <person name="Barry K."/>
            <person name="Detter J.C."/>
            <person name="Glavina del Rio T."/>
            <person name="Dalin E."/>
            <person name="Tice H."/>
            <person name="Pitluck S."/>
            <person name="Kiss H."/>
            <person name="Brettin T."/>
            <person name="Bruce D."/>
            <person name="Han C."/>
            <person name="Tapia R."/>
            <person name="Gilna P."/>
            <person name="Schmutz J."/>
            <person name="Larimer F."/>
            <person name="Land M."/>
            <person name="Hauser L."/>
            <person name="Kyrpides N."/>
            <person name="Kim E."/>
            <person name="Stahl D."/>
            <person name="Richardson P."/>
        </authorList>
    </citation>
    <scope>NUCLEOTIDE SEQUENCE [LARGE SCALE GENOMIC DNA]</scope>
    <source>
        <strain>AAC00-1</strain>
    </source>
</reference>
<comment type="function">
    <text evidence="1">NAD-binding protein involved in the addition of a carboxymethylaminomethyl (cmnm) group at the wobble position (U34) of certain tRNAs, forming tRNA-cmnm(5)s(2)U34.</text>
</comment>
<comment type="cofactor">
    <cofactor evidence="1">
        <name>FAD</name>
        <dbReference type="ChEBI" id="CHEBI:57692"/>
    </cofactor>
</comment>
<comment type="subunit">
    <text evidence="1">Homodimer. Heterotetramer of two MnmE and two MnmG subunits.</text>
</comment>
<comment type="subcellular location">
    <subcellularLocation>
        <location evidence="1">Cytoplasm</location>
    </subcellularLocation>
</comment>
<comment type="similarity">
    <text evidence="1">Belongs to the MnmG family.</text>
</comment>
<accession>A1TI78</accession>
<sequence length="655" mass="72357">MLYPQEFDVIVVGGGHAGTEAALAAARMGSRTLLLTHNIETLGQMSCNPSIGGIGKGHLVKEVDALGGAMALATDEGGIQFRILNSSKGPAVRATRAQADRILYKAAIRRMLENQPNLWLFQQAVDDLMVEGDRVVGAITQVGIRFRARTVVLTAGTFLDGKIHVGLNNYSAGRAGDPPAVSLSARLKELQLPQGRLKTGTPPRIDGRSIDFSQCEEQPGDGMPGGVNEGTLPVFSFMGSTAMHPRQVPCWITHTNERTHEIIRSGFDRSPMFTGKIEGVGPRYCPSVEDKINRFADKDSHQIFLEPEGLTTHEFYPNGISTSLPFDVQYDLVRSMRGLENAHILRPGYAIEYDYFDPRSLKSNFETRQIQGLFFAGQINGTTGYEEAAAQGLFAGINAALQCRGESAWLPRRDEAYLGVLVNDLITKGVTEPYRMFTSRAEFRLQLREDNADMRLTEAGRRMGLVDDARWDAFSRKRDAVARETERLKSTWVNPRNLPAEESARVLGKSIEHEYNLFDLLRRPDVTYDALTGMDGGKYASTAVSRETLGELSAPVIEQVEIAAKYAGYIDRQKDEVQRAFYYENLQLPQELDYMQVAALSIEVRQKLQKHRPETLGQASRISGVTPAAVSLLLVHLKKGGFRGFTAQQADEVAA</sequence>
<protein>
    <recommendedName>
        <fullName evidence="1">tRNA uridine 5-carboxymethylaminomethyl modification enzyme MnmG</fullName>
    </recommendedName>
    <alternativeName>
        <fullName evidence="1">Glucose-inhibited division protein A</fullName>
    </alternativeName>
</protein>
<organism>
    <name type="scientific">Paracidovorax citrulli (strain AAC00-1)</name>
    <name type="common">Acidovorax citrulli</name>
    <dbReference type="NCBI Taxonomy" id="397945"/>
    <lineage>
        <taxon>Bacteria</taxon>
        <taxon>Pseudomonadati</taxon>
        <taxon>Pseudomonadota</taxon>
        <taxon>Betaproteobacteria</taxon>
        <taxon>Burkholderiales</taxon>
        <taxon>Comamonadaceae</taxon>
        <taxon>Paracidovorax</taxon>
    </lineage>
</organism>
<name>MNMG_PARC0</name>
<dbReference type="EMBL" id="CP000512">
    <property type="protein sequence ID" value="ABM30666.1"/>
    <property type="molecule type" value="Genomic_DNA"/>
</dbReference>
<dbReference type="RefSeq" id="WP_011793244.1">
    <property type="nucleotide sequence ID" value="NC_008752.1"/>
</dbReference>
<dbReference type="SMR" id="A1TI78"/>
<dbReference type="STRING" id="397945.Aave_0051"/>
<dbReference type="KEGG" id="aav:Aave_0051"/>
<dbReference type="eggNOG" id="COG0445">
    <property type="taxonomic scope" value="Bacteria"/>
</dbReference>
<dbReference type="HOGENOM" id="CLU_007831_2_2_4"/>
<dbReference type="OrthoDB" id="9815560at2"/>
<dbReference type="Proteomes" id="UP000002596">
    <property type="component" value="Chromosome"/>
</dbReference>
<dbReference type="GO" id="GO:0005829">
    <property type="term" value="C:cytosol"/>
    <property type="evidence" value="ECO:0007669"/>
    <property type="project" value="TreeGrafter"/>
</dbReference>
<dbReference type="GO" id="GO:0050660">
    <property type="term" value="F:flavin adenine dinucleotide binding"/>
    <property type="evidence" value="ECO:0007669"/>
    <property type="project" value="UniProtKB-UniRule"/>
</dbReference>
<dbReference type="GO" id="GO:0030488">
    <property type="term" value="P:tRNA methylation"/>
    <property type="evidence" value="ECO:0007669"/>
    <property type="project" value="TreeGrafter"/>
</dbReference>
<dbReference type="GO" id="GO:0002098">
    <property type="term" value="P:tRNA wobble uridine modification"/>
    <property type="evidence" value="ECO:0007669"/>
    <property type="project" value="InterPro"/>
</dbReference>
<dbReference type="FunFam" id="1.10.10.1800:FF:000001">
    <property type="entry name" value="tRNA uridine 5-carboxymethylaminomethyl modification enzyme MnmG"/>
    <property type="match status" value="1"/>
</dbReference>
<dbReference type="FunFam" id="1.10.150.570:FF:000001">
    <property type="entry name" value="tRNA uridine 5-carboxymethylaminomethyl modification enzyme MnmG"/>
    <property type="match status" value="1"/>
</dbReference>
<dbReference type="FunFam" id="3.50.50.60:FF:000002">
    <property type="entry name" value="tRNA uridine 5-carboxymethylaminomethyl modification enzyme MnmG"/>
    <property type="match status" value="1"/>
</dbReference>
<dbReference type="FunFam" id="3.50.50.60:FF:000010">
    <property type="entry name" value="tRNA uridine 5-carboxymethylaminomethyl modification enzyme MnmG"/>
    <property type="match status" value="1"/>
</dbReference>
<dbReference type="Gene3D" id="3.50.50.60">
    <property type="entry name" value="FAD/NAD(P)-binding domain"/>
    <property type="match status" value="2"/>
</dbReference>
<dbReference type="Gene3D" id="1.10.150.570">
    <property type="entry name" value="GidA associated domain, C-terminal subdomain"/>
    <property type="match status" value="1"/>
</dbReference>
<dbReference type="Gene3D" id="1.10.10.1800">
    <property type="entry name" value="tRNA uridine 5-carboxymethylaminomethyl modification enzyme MnmG/GidA"/>
    <property type="match status" value="1"/>
</dbReference>
<dbReference type="HAMAP" id="MF_00129">
    <property type="entry name" value="MnmG_GidA"/>
    <property type="match status" value="1"/>
</dbReference>
<dbReference type="InterPro" id="IPR036188">
    <property type="entry name" value="FAD/NAD-bd_sf"/>
</dbReference>
<dbReference type="InterPro" id="IPR049312">
    <property type="entry name" value="GIDA_C_N"/>
</dbReference>
<dbReference type="InterPro" id="IPR004416">
    <property type="entry name" value="MnmG"/>
</dbReference>
<dbReference type="InterPro" id="IPR002218">
    <property type="entry name" value="MnmG-rel"/>
</dbReference>
<dbReference type="InterPro" id="IPR020595">
    <property type="entry name" value="MnmG-rel_CS"/>
</dbReference>
<dbReference type="InterPro" id="IPR026904">
    <property type="entry name" value="MnmG_C"/>
</dbReference>
<dbReference type="InterPro" id="IPR047001">
    <property type="entry name" value="MnmG_C_subdom"/>
</dbReference>
<dbReference type="InterPro" id="IPR044920">
    <property type="entry name" value="MnmG_C_subdom_sf"/>
</dbReference>
<dbReference type="InterPro" id="IPR040131">
    <property type="entry name" value="MnmG_N"/>
</dbReference>
<dbReference type="NCBIfam" id="TIGR00136">
    <property type="entry name" value="mnmG_gidA"/>
    <property type="match status" value="1"/>
</dbReference>
<dbReference type="PANTHER" id="PTHR11806">
    <property type="entry name" value="GLUCOSE INHIBITED DIVISION PROTEIN A"/>
    <property type="match status" value="1"/>
</dbReference>
<dbReference type="PANTHER" id="PTHR11806:SF0">
    <property type="entry name" value="PROTEIN MTO1 HOMOLOG, MITOCHONDRIAL"/>
    <property type="match status" value="1"/>
</dbReference>
<dbReference type="Pfam" id="PF01134">
    <property type="entry name" value="GIDA"/>
    <property type="match status" value="1"/>
</dbReference>
<dbReference type="Pfam" id="PF21680">
    <property type="entry name" value="GIDA_C_1st"/>
    <property type="match status" value="1"/>
</dbReference>
<dbReference type="Pfam" id="PF13932">
    <property type="entry name" value="SAM_GIDA_C"/>
    <property type="match status" value="1"/>
</dbReference>
<dbReference type="SMART" id="SM01228">
    <property type="entry name" value="GIDA_assoc_3"/>
    <property type="match status" value="1"/>
</dbReference>
<dbReference type="SUPFAM" id="SSF51905">
    <property type="entry name" value="FAD/NAD(P)-binding domain"/>
    <property type="match status" value="1"/>
</dbReference>
<dbReference type="PROSITE" id="PS01280">
    <property type="entry name" value="GIDA_1"/>
    <property type="match status" value="1"/>
</dbReference>
<dbReference type="PROSITE" id="PS01281">
    <property type="entry name" value="GIDA_2"/>
    <property type="match status" value="1"/>
</dbReference>
<gene>
    <name evidence="1" type="primary">mnmG</name>
    <name evidence="1" type="synonym">gidA</name>
    <name type="ordered locus">Aave_0051</name>
</gene>
<keyword id="KW-0963">Cytoplasm</keyword>
<keyword id="KW-0274">FAD</keyword>
<keyword id="KW-0285">Flavoprotein</keyword>
<keyword id="KW-0520">NAD</keyword>
<keyword id="KW-0819">tRNA processing</keyword>
<evidence type="ECO:0000255" key="1">
    <source>
        <dbReference type="HAMAP-Rule" id="MF_00129"/>
    </source>
</evidence>
<proteinExistence type="inferred from homology"/>